<protein>
    <recommendedName>
        <fullName>Uncharacterized protein C45G9.11</fullName>
    </recommendedName>
</protein>
<evidence type="ECO:0000256" key="1">
    <source>
        <dbReference type="SAM" id="MobiDB-lite"/>
    </source>
</evidence>
<organism>
    <name type="scientific">Caenorhabditis elegans</name>
    <dbReference type="NCBI Taxonomy" id="6239"/>
    <lineage>
        <taxon>Eukaryota</taxon>
        <taxon>Metazoa</taxon>
        <taxon>Ecdysozoa</taxon>
        <taxon>Nematoda</taxon>
        <taxon>Chromadorea</taxon>
        <taxon>Rhabditida</taxon>
        <taxon>Rhabditina</taxon>
        <taxon>Rhabditomorpha</taxon>
        <taxon>Rhabditoidea</taxon>
        <taxon>Rhabditidae</taxon>
        <taxon>Peloderinae</taxon>
        <taxon>Caenorhabditis</taxon>
    </lineage>
</organism>
<feature type="chain" id="PRO_0000065243" description="Uncharacterized protein C45G9.11">
    <location>
        <begin position="1"/>
        <end position="354"/>
    </location>
</feature>
<feature type="region of interest" description="Disordered" evidence="1">
    <location>
        <begin position="96"/>
        <end position="130"/>
    </location>
</feature>
<feature type="compositionally biased region" description="Basic and acidic residues" evidence="1">
    <location>
        <begin position="113"/>
        <end position="127"/>
    </location>
</feature>
<proteinExistence type="predicted"/>
<gene>
    <name type="ORF">C45G9.11</name>
</gene>
<accession>Q09282</accession>
<dbReference type="EMBL" id="FO080873">
    <property type="protein sequence ID" value="CCD67400.1"/>
    <property type="molecule type" value="Genomic_DNA"/>
</dbReference>
<dbReference type="PIR" id="H88448">
    <property type="entry name" value="H88448"/>
</dbReference>
<dbReference type="RefSeq" id="NP_498077.1">
    <property type="nucleotide sequence ID" value="NM_065676.2"/>
</dbReference>
<dbReference type="FunCoup" id="Q09282">
    <property type="interactions" value="121"/>
</dbReference>
<dbReference type="PaxDb" id="6239-C45G9.11"/>
<dbReference type="EnsemblMetazoa" id="C45G9.11.1">
    <property type="protein sequence ID" value="C45G9.11.1"/>
    <property type="gene ID" value="WBGene00016682"/>
</dbReference>
<dbReference type="GeneID" id="175690"/>
<dbReference type="KEGG" id="cel:CELE_C45G9.11"/>
<dbReference type="UCSC" id="C45G9.11">
    <property type="organism name" value="c. elegans"/>
</dbReference>
<dbReference type="AGR" id="WB:WBGene00016682"/>
<dbReference type="CTD" id="175690"/>
<dbReference type="WormBase" id="C45G9.11">
    <property type="protein sequence ID" value="CE27856"/>
    <property type="gene ID" value="WBGene00016682"/>
</dbReference>
<dbReference type="eggNOG" id="ENOG502SRQY">
    <property type="taxonomic scope" value="Eukaryota"/>
</dbReference>
<dbReference type="HOGENOM" id="CLU_783538_0_0_1"/>
<dbReference type="InParanoid" id="Q09282"/>
<dbReference type="OMA" id="LCIFEAM"/>
<dbReference type="OrthoDB" id="5851221at2759"/>
<dbReference type="PRO" id="PR:Q09282"/>
<dbReference type="Proteomes" id="UP000001940">
    <property type="component" value="Chromosome III"/>
</dbReference>
<dbReference type="Bgee" id="WBGene00016682">
    <property type="expression patterns" value="Expressed in larva and 1 other cell type or tissue"/>
</dbReference>
<name>YQIB_CAEEL</name>
<keyword id="KW-1185">Reference proteome</keyword>
<reference key="1">
    <citation type="journal article" date="1998" name="Science">
        <title>Genome sequence of the nematode C. elegans: a platform for investigating biology.</title>
        <authorList>
            <consortium name="The C. elegans sequencing consortium"/>
        </authorList>
    </citation>
    <scope>NUCLEOTIDE SEQUENCE [LARGE SCALE GENOMIC DNA]</scope>
    <source>
        <strain>Bristol N2</strain>
    </source>
</reference>
<sequence>MEPVISPTLDSKQSWSIFILDHEESLASPRKLNIPNPENVYSENRRYFADQDFRRPRHKPDQNMVEYWVPPEKTSVAKNNTTGQAVTPGQAKKLNQVCPASAPNGKRAMKIPKVKEPRGENSSKKSSADQAPGPFRVMYWKVGQYFEKASGTVNHHYQKVVLFRNRMKANKVAPIHTKVQSRHLELEPLCCLSSCLVRGGCTTVVVFELCYVVATALCIFEAMFRKKFALWEPFPKSFNGWFAHPLFYYTIAVYDVALFVIAIATARALVNFDKAVLHIHYIFCIFSFFINFFFLIFSIWSLVSPGSLTFTPINCLLIFCFLYQLPLNIWGFFVVKSCRDFFALIHVFVSLAEA</sequence>